<keyword id="KW-0131">Cell cycle</keyword>
<keyword id="KW-0132">Cell division</keyword>
<keyword id="KW-0159">Chromosome partition</keyword>
<keyword id="KW-0963">Cytoplasm</keyword>
<protein>
    <recommendedName>
        <fullName evidence="1">Segregation and condensation protein A</fullName>
    </recommendedName>
</protein>
<reference key="1">
    <citation type="journal article" date="2001" name="Microb. Drug Resist.">
        <title>Annotated draft genomic sequence from a Streptococcus pneumoniae type 19F clinical isolate.</title>
        <authorList>
            <person name="Dopazo J."/>
            <person name="Mendoza A."/>
            <person name="Herrero J."/>
            <person name="Caldara F."/>
            <person name="Humbert Y."/>
            <person name="Friedli L."/>
            <person name="Guerrier M."/>
            <person name="Grand-Schenk E."/>
            <person name="Gandin C."/>
            <person name="de Francesco M."/>
            <person name="Polissi A."/>
            <person name="Buell G."/>
            <person name="Feger G."/>
            <person name="Garcia E."/>
            <person name="Peitsch M."/>
            <person name="Garcia-Bustos J.F."/>
        </authorList>
    </citation>
    <scope>NUCLEOTIDE SEQUENCE [LARGE SCALE GENOMIC DNA]</scope>
    <source>
        <strain>G54</strain>
    </source>
</reference>
<reference key="2">
    <citation type="submission" date="2008-03" db="EMBL/GenBank/DDBJ databases">
        <title>Pneumococcal beta glucoside metabolism investigated by whole genome comparison.</title>
        <authorList>
            <person name="Mulas L."/>
            <person name="Trappetti C."/>
            <person name="Hakenbeck R."/>
            <person name="Iannelli F."/>
            <person name="Pozzi G."/>
            <person name="Davidsen T.M."/>
            <person name="Tettelin H."/>
            <person name="Oggioni M."/>
        </authorList>
    </citation>
    <scope>NUCLEOTIDE SEQUENCE [LARGE SCALE GENOMIC DNA]</scope>
    <source>
        <strain>G54</strain>
    </source>
</reference>
<evidence type="ECO:0000255" key="1">
    <source>
        <dbReference type="HAMAP-Rule" id="MF_01805"/>
    </source>
</evidence>
<accession>B5E1Y8</accession>
<feature type="chain" id="PRO_1000187569" description="Segregation and condensation protein A">
    <location>
        <begin position="1"/>
        <end position="242"/>
    </location>
</feature>
<gene>
    <name evidence="1" type="primary">scpA</name>
    <name type="ordered locus">SPG_1761</name>
</gene>
<name>SCPA_STRP4</name>
<dbReference type="EMBL" id="CP001015">
    <property type="protein sequence ID" value="ACF56195.1"/>
    <property type="molecule type" value="Genomic_DNA"/>
</dbReference>
<dbReference type="SMR" id="B5E1Y8"/>
<dbReference type="KEGG" id="spx:SPG_1761"/>
<dbReference type="HOGENOM" id="CLU_038686_3_3_9"/>
<dbReference type="GO" id="GO:0005737">
    <property type="term" value="C:cytoplasm"/>
    <property type="evidence" value="ECO:0007669"/>
    <property type="project" value="UniProtKB-SubCell"/>
</dbReference>
<dbReference type="GO" id="GO:0051301">
    <property type="term" value="P:cell division"/>
    <property type="evidence" value="ECO:0007669"/>
    <property type="project" value="UniProtKB-KW"/>
</dbReference>
<dbReference type="GO" id="GO:0007059">
    <property type="term" value="P:chromosome segregation"/>
    <property type="evidence" value="ECO:0007669"/>
    <property type="project" value="UniProtKB-UniRule"/>
</dbReference>
<dbReference type="GO" id="GO:0006260">
    <property type="term" value="P:DNA replication"/>
    <property type="evidence" value="ECO:0007669"/>
    <property type="project" value="UniProtKB-UniRule"/>
</dbReference>
<dbReference type="Gene3D" id="6.10.250.2410">
    <property type="match status" value="1"/>
</dbReference>
<dbReference type="Gene3D" id="1.10.10.580">
    <property type="entry name" value="Structural maintenance of chromosome 1. Chain E"/>
    <property type="match status" value="1"/>
</dbReference>
<dbReference type="HAMAP" id="MF_01805">
    <property type="entry name" value="ScpA"/>
    <property type="match status" value="1"/>
</dbReference>
<dbReference type="InterPro" id="IPR003768">
    <property type="entry name" value="ScpA"/>
</dbReference>
<dbReference type="InterPro" id="IPR023093">
    <property type="entry name" value="ScpA-like_C"/>
</dbReference>
<dbReference type="NCBIfam" id="NF000993">
    <property type="entry name" value="PRK00104.1-2"/>
    <property type="match status" value="1"/>
</dbReference>
<dbReference type="PANTHER" id="PTHR33969">
    <property type="entry name" value="SEGREGATION AND CONDENSATION PROTEIN A"/>
    <property type="match status" value="1"/>
</dbReference>
<dbReference type="PANTHER" id="PTHR33969:SF2">
    <property type="entry name" value="SEGREGATION AND CONDENSATION PROTEIN A"/>
    <property type="match status" value="1"/>
</dbReference>
<dbReference type="Pfam" id="PF02616">
    <property type="entry name" value="SMC_ScpA"/>
    <property type="match status" value="1"/>
</dbReference>
<proteinExistence type="inferred from homology"/>
<organism>
    <name type="scientific">Streptococcus pneumoniae serotype 19F (strain G54)</name>
    <dbReference type="NCBI Taxonomy" id="512566"/>
    <lineage>
        <taxon>Bacteria</taxon>
        <taxon>Bacillati</taxon>
        <taxon>Bacillota</taxon>
        <taxon>Bacilli</taxon>
        <taxon>Lactobacillales</taxon>
        <taxon>Streptococcaceae</taxon>
        <taxon>Streptococcus</taxon>
    </lineage>
</organism>
<sequence>MDIKLKDFEGPLDLLLHLVSKYQMDIYDVPITEVIEQYLAYVSTLQAMRLEVTGEYMVMASQLMLIKSRKLLPKVAEVTDLGDDLEQDLLSQIEEYRKFKLLGEHLEAKHQERAQYYSKAPTELIYEDAELVHDKTTIDLFLAFSNILAKKKEEFAQNHTTILRDEYKIEDMMIIVKESLIGRDQLRLQDLFKEAQNVQEIITLFLATLELIKTQELILVQEESFGDIYLMEKKEESQVPQS</sequence>
<comment type="function">
    <text evidence="1">Participates in chromosomal partition during cell division. May act via the formation of a condensin-like complex containing Smc and ScpB that pull DNA away from mid-cell into both cell halves.</text>
</comment>
<comment type="subunit">
    <text evidence="1">Component of a cohesin-like complex composed of ScpA, ScpB and the Smc homodimer, in which ScpA and ScpB bind to the head domain of Smc. The presence of the three proteins is required for the association of the complex with DNA.</text>
</comment>
<comment type="subcellular location">
    <subcellularLocation>
        <location evidence="1">Cytoplasm</location>
    </subcellularLocation>
    <text evidence="1">Associated with two foci at the outer edges of the nucleoid region in young cells, and at four foci within both cell halves in older cells.</text>
</comment>
<comment type="similarity">
    <text evidence="1">Belongs to the ScpA family.</text>
</comment>